<sequence length="131" mass="14711">MDKVDKSLDTWREELTDEQFHVCRLGGTERPFTGAYHDSKTPGIYHCACCGEALFDSDAKYDSGSGWPSYFQPINDEVIASLDDYSHGMHRIEVKCAKCDAHLGHVFPDGPRPTGLRYCINSLSLKLVPRD</sequence>
<organism>
    <name type="scientific">Ectopseudomonas mendocina (strain ymp)</name>
    <name type="common">Pseudomonas mendocina</name>
    <dbReference type="NCBI Taxonomy" id="399739"/>
    <lineage>
        <taxon>Bacteria</taxon>
        <taxon>Pseudomonadati</taxon>
        <taxon>Pseudomonadota</taxon>
        <taxon>Gammaproteobacteria</taxon>
        <taxon>Pseudomonadales</taxon>
        <taxon>Pseudomonadaceae</taxon>
        <taxon>Ectopseudomonas</taxon>
    </lineage>
</organism>
<protein>
    <recommendedName>
        <fullName evidence="1">Peptide methionine sulfoxide reductase MsrB</fullName>
        <ecNumber evidence="1">1.8.4.12</ecNumber>
    </recommendedName>
    <alternativeName>
        <fullName evidence="1">Peptide-methionine (R)-S-oxide reductase</fullName>
    </alternativeName>
</protein>
<proteinExistence type="inferred from homology"/>
<reference key="1">
    <citation type="submission" date="2007-04" db="EMBL/GenBank/DDBJ databases">
        <title>Complete sequence of Pseudomonas mendocina ymp.</title>
        <authorList>
            <consortium name="US DOE Joint Genome Institute"/>
            <person name="Copeland A."/>
            <person name="Lucas S."/>
            <person name="Lapidus A."/>
            <person name="Barry K."/>
            <person name="Glavina del Rio T."/>
            <person name="Dalin E."/>
            <person name="Tice H."/>
            <person name="Pitluck S."/>
            <person name="Kiss H."/>
            <person name="Brettin T."/>
            <person name="Detter J.C."/>
            <person name="Bruce D."/>
            <person name="Han C."/>
            <person name="Schmutz J."/>
            <person name="Larimer F."/>
            <person name="Land M."/>
            <person name="Hauser L."/>
            <person name="Kyrpides N."/>
            <person name="Mikhailova N."/>
            <person name="Hersman L."/>
            <person name="Dubois J."/>
            <person name="Maurice P."/>
            <person name="Richardson P."/>
        </authorList>
    </citation>
    <scope>NUCLEOTIDE SEQUENCE [LARGE SCALE GENOMIC DNA]</scope>
    <source>
        <strain>ymp</strain>
    </source>
</reference>
<evidence type="ECO:0000255" key="1">
    <source>
        <dbReference type="HAMAP-Rule" id="MF_01400"/>
    </source>
</evidence>
<evidence type="ECO:0000255" key="2">
    <source>
        <dbReference type="PROSITE-ProRule" id="PRU01126"/>
    </source>
</evidence>
<keyword id="KW-0479">Metal-binding</keyword>
<keyword id="KW-0560">Oxidoreductase</keyword>
<keyword id="KW-0862">Zinc</keyword>
<dbReference type="EC" id="1.8.4.12" evidence="1"/>
<dbReference type="EMBL" id="CP000680">
    <property type="protein sequence ID" value="ABP85277.1"/>
    <property type="molecule type" value="Genomic_DNA"/>
</dbReference>
<dbReference type="SMR" id="A4XVB1"/>
<dbReference type="STRING" id="399739.Pmen_2521"/>
<dbReference type="KEGG" id="pmy:Pmen_2521"/>
<dbReference type="PATRIC" id="fig|399739.8.peg.2547"/>
<dbReference type="eggNOG" id="COG0229">
    <property type="taxonomic scope" value="Bacteria"/>
</dbReference>
<dbReference type="HOGENOM" id="CLU_031040_8_5_6"/>
<dbReference type="OrthoDB" id="9785497at2"/>
<dbReference type="GO" id="GO:0005737">
    <property type="term" value="C:cytoplasm"/>
    <property type="evidence" value="ECO:0007669"/>
    <property type="project" value="TreeGrafter"/>
</dbReference>
<dbReference type="GO" id="GO:0033743">
    <property type="term" value="F:peptide-methionine (R)-S-oxide reductase activity"/>
    <property type="evidence" value="ECO:0007669"/>
    <property type="project" value="UniProtKB-UniRule"/>
</dbReference>
<dbReference type="GO" id="GO:0008270">
    <property type="term" value="F:zinc ion binding"/>
    <property type="evidence" value="ECO:0007669"/>
    <property type="project" value="UniProtKB-UniRule"/>
</dbReference>
<dbReference type="GO" id="GO:0030091">
    <property type="term" value="P:protein repair"/>
    <property type="evidence" value="ECO:0007669"/>
    <property type="project" value="InterPro"/>
</dbReference>
<dbReference type="GO" id="GO:0006979">
    <property type="term" value="P:response to oxidative stress"/>
    <property type="evidence" value="ECO:0007669"/>
    <property type="project" value="InterPro"/>
</dbReference>
<dbReference type="FunFam" id="2.170.150.20:FF:000001">
    <property type="entry name" value="Peptide methionine sulfoxide reductase MsrB"/>
    <property type="match status" value="1"/>
</dbReference>
<dbReference type="Gene3D" id="2.170.150.20">
    <property type="entry name" value="Peptide methionine sulfoxide reductase"/>
    <property type="match status" value="1"/>
</dbReference>
<dbReference type="HAMAP" id="MF_01400">
    <property type="entry name" value="MsrB"/>
    <property type="match status" value="1"/>
</dbReference>
<dbReference type="InterPro" id="IPR028427">
    <property type="entry name" value="Met_Sox_Rdtase_MsrB"/>
</dbReference>
<dbReference type="InterPro" id="IPR002579">
    <property type="entry name" value="Met_Sox_Rdtase_MsrB_dom"/>
</dbReference>
<dbReference type="InterPro" id="IPR011057">
    <property type="entry name" value="Mss4-like_sf"/>
</dbReference>
<dbReference type="NCBIfam" id="TIGR00357">
    <property type="entry name" value="peptide-methionine (R)-S-oxide reductase MsrB"/>
    <property type="match status" value="1"/>
</dbReference>
<dbReference type="PANTHER" id="PTHR10173">
    <property type="entry name" value="METHIONINE SULFOXIDE REDUCTASE"/>
    <property type="match status" value="1"/>
</dbReference>
<dbReference type="PANTHER" id="PTHR10173:SF52">
    <property type="entry name" value="METHIONINE-R-SULFOXIDE REDUCTASE B1"/>
    <property type="match status" value="1"/>
</dbReference>
<dbReference type="Pfam" id="PF01641">
    <property type="entry name" value="SelR"/>
    <property type="match status" value="1"/>
</dbReference>
<dbReference type="SUPFAM" id="SSF51316">
    <property type="entry name" value="Mss4-like"/>
    <property type="match status" value="1"/>
</dbReference>
<dbReference type="PROSITE" id="PS51790">
    <property type="entry name" value="MSRB"/>
    <property type="match status" value="1"/>
</dbReference>
<comment type="catalytic activity">
    <reaction evidence="1">
        <text>L-methionyl-[protein] + [thioredoxin]-disulfide + H2O = L-methionyl-(R)-S-oxide-[protein] + [thioredoxin]-dithiol</text>
        <dbReference type="Rhea" id="RHEA:24164"/>
        <dbReference type="Rhea" id="RHEA-COMP:10698"/>
        <dbReference type="Rhea" id="RHEA-COMP:10700"/>
        <dbReference type="Rhea" id="RHEA-COMP:12313"/>
        <dbReference type="Rhea" id="RHEA-COMP:12314"/>
        <dbReference type="ChEBI" id="CHEBI:15377"/>
        <dbReference type="ChEBI" id="CHEBI:16044"/>
        <dbReference type="ChEBI" id="CHEBI:29950"/>
        <dbReference type="ChEBI" id="CHEBI:45764"/>
        <dbReference type="ChEBI" id="CHEBI:50058"/>
        <dbReference type="EC" id="1.8.4.12"/>
    </reaction>
</comment>
<comment type="cofactor">
    <cofactor evidence="1">
        <name>Zn(2+)</name>
        <dbReference type="ChEBI" id="CHEBI:29105"/>
    </cofactor>
    <text evidence="1">Binds 1 zinc ion per subunit. The zinc ion is important for the structural integrity of the protein.</text>
</comment>
<comment type="similarity">
    <text evidence="1">Belongs to the MsrB Met sulfoxide reductase family.</text>
</comment>
<feature type="chain" id="PRO_1000068286" description="Peptide methionine sulfoxide reductase MsrB">
    <location>
        <begin position="1"/>
        <end position="131"/>
    </location>
</feature>
<feature type="domain" description="MsrB" evidence="2">
    <location>
        <begin position="8"/>
        <end position="130"/>
    </location>
</feature>
<feature type="active site" description="Nucleophile" evidence="2">
    <location>
        <position position="119"/>
    </location>
</feature>
<feature type="binding site" evidence="2">
    <location>
        <position position="47"/>
    </location>
    <ligand>
        <name>Zn(2+)</name>
        <dbReference type="ChEBI" id="CHEBI:29105"/>
    </ligand>
</feature>
<feature type="binding site" evidence="2">
    <location>
        <position position="50"/>
    </location>
    <ligand>
        <name>Zn(2+)</name>
        <dbReference type="ChEBI" id="CHEBI:29105"/>
    </ligand>
</feature>
<feature type="binding site" evidence="2">
    <location>
        <position position="96"/>
    </location>
    <ligand>
        <name>Zn(2+)</name>
        <dbReference type="ChEBI" id="CHEBI:29105"/>
    </ligand>
</feature>
<feature type="binding site" evidence="2">
    <location>
        <position position="99"/>
    </location>
    <ligand>
        <name>Zn(2+)</name>
        <dbReference type="ChEBI" id="CHEBI:29105"/>
    </ligand>
</feature>
<gene>
    <name evidence="1" type="primary">msrB</name>
    <name type="ordered locus">Pmen_2521</name>
</gene>
<name>MSRB_ECTM1</name>
<accession>A4XVB1</accession>